<keyword id="KW-0004">4Fe-4S</keyword>
<keyword id="KW-0997">Cell inner membrane</keyword>
<keyword id="KW-1003">Cell membrane</keyword>
<keyword id="KW-0408">Iron</keyword>
<keyword id="KW-0411">Iron-sulfur</keyword>
<keyword id="KW-0472">Membrane</keyword>
<keyword id="KW-0479">Metal-binding</keyword>
<keyword id="KW-0520">NAD</keyword>
<keyword id="KW-0874">Quinone</keyword>
<keyword id="KW-1185">Reference proteome</keyword>
<keyword id="KW-0677">Repeat</keyword>
<keyword id="KW-1278">Translocase</keyword>
<keyword id="KW-0830">Ubiquinone</keyword>
<gene>
    <name evidence="1" type="primary">nuoI</name>
    <name type="ordered locus">BAV1050</name>
</gene>
<accession>Q2KUZ8</accession>
<evidence type="ECO:0000255" key="1">
    <source>
        <dbReference type="HAMAP-Rule" id="MF_01351"/>
    </source>
</evidence>
<proteinExistence type="inferred from homology"/>
<sequence>MEAIKDFFGSLLLTELFKGMRLTGKYFFKRKMTLRYPTEKTPASPRFRGLHALRRYPNGEERCIACKLCEAVCPALAITIESDQREDGTRRTTRYDIDLTKCIFCGFCEESCPVDSIVETHIHEYHGEKRGDLYFTKDMLLAVGDRYEADIAQRRAEDAPYR</sequence>
<dbReference type="EC" id="7.1.1.-" evidence="1"/>
<dbReference type="EMBL" id="AM167904">
    <property type="protein sequence ID" value="CAJ48659.1"/>
    <property type="molecule type" value="Genomic_DNA"/>
</dbReference>
<dbReference type="RefSeq" id="WP_012416734.1">
    <property type="nucleotide sequence ID" value="NC_010645.1"/>
</dbReference>
<dbReference type="SMR" id="Q2KUZ8"/>
<dbReference type="STRING" id="360910.BAV1050"/>
<dbReference type="GeneID" id="92935756"/>
<dbReference type="KEGG" id="bav:BAV1050"/>
<dbReference type="eggNOG" id="COG1143">
    <property type="taxonomic scope" value="Bacteria"/>
</dbReference>
<dbReference type="HOGENOM" id="CLU_067218_5_1_4"/>
<dbReference type="OrthoDB" id="9808559at2"/>
<dbReference type="Proteomes" id="UP000001977">
    <property type="component" value="Chromosome"/>
</dbReference>
<dbReference type="GO" id="GO:0005886">
    <property type="term" value="C:plasma membrane"/>
    <property type="evidence" value="ECO:0007669"/>
    <property type="project" value="UniProtKB-SubCell"/>
</dbReference>
<dbReference type="GO" id="GO:0051539">
    <property type="term" value="F:4 iron, 4 sulfur cluster binding"/>
    <property type="evidence" value="ECO:0007669"/>
    <property type="project" value="UniProtKB-KW"/>
</dbReference>
<dbReference type="GO" id="GO:0005506">
    <property type="term" value="F:iron ion binding"/>
    <property type="evidence" value="ECO:0007669"/>
    <property type="project" value="UniProtKB-UniRule"/>
</dbReference>
<dbReference type="GO" id="GO:0050136">
    <property type="term" value="F:NADH:ubiquinone reductase (non-electrogenic) activity"/>
    <property type="evidence" value="ECO:0007669"/>
    <property type="project" value="UniProtKB-UniRule"/>
</dbReference>
<dbReference type="GO" id="GO:0048038">
    <property type="term" value="F:quinone binding"/>
    <property type="evidence" value="ECO:0007669"/>
    <property type="project" value="UniProtKB-KW"/>
</dbReference>
<dbReference type="GO" id="GO:0009060">
    <property type="term" value="P:aerobic respiration"/>
    <property type="evidence" value="ECO:0007669"/>
    <property type="project" value="TreeGrafter"/>
</dbReference>
<dbReference type="FunFam" id="3.30.70.3270:FF:000003">
    <property type="entry name" value="NADH-quinone oxidoreductase subunit I"/>
    <property type="match status" value="1"/>
</dbReference>
<dbReference type="Gene3D" id="3.30.70.3270">
    <property type="match status" value="1"/>
</dbReference>
<dbReference type="HAMAP" id="MF_01351">
    <property type="entry name" value="NDH1_NuoI"/>
    <property type="match status" value="1"/>
</dbReference>
<dbReference type="InterPro" id="IPR017896">
    <property type="entry name" value="4Fe4S_Fe-S-bd"/>
</dbReference>
<dbReference type="InterPro" id="IPR017900">
    <property type="entry name" value="4Fe4S_Fe_S_CS"/>
</dbReference>
<dbReference type="InterPro" id="IPR010226">
    <property type="entry name" value="NADH_quinone_OxRdtase_chainI"/>
</dbReference>
<dbReference type="NCBIfam" id="TIGR01971">
    <property type="entry name" value="NuoI"/>
    <property type="match status" value="1"/>
</dbReference>
<dbReference type="NCBIfam" id="NF004538">
    <property type="entry name" value="PRK05888.1-4"/>
    <property type="match status" value="1"/>
</dbReference>
<dbReference type="NCBIfam" id="NF004539">
    <property type="entry name" value="PRK05888.1-5"/>
    <property type="match status" value="1"/>
</dbReference>
<dbReference type="PANTHER" id="PTHR10849:SF20">
    <property type="entry name" value="NADH DEHYDROGENASE [UBIQUINONE] IRON-SULFUR PROTEIN 8, MITOCHONDRIAL"/>
    <property type="match status" value="1"/>
</dbReference>
<dbReference type="PANTHER" id="PTHR10849">
    <property type="entry name" value="NADH DEHYDROGENASE UBIQUINONE IRON-SULFUR PROTEIN 8, MITOCHONDRIAL"/>
    <property type="match status" value="1"/>
</dbReference>
<dbReference type="Pfam" id="PF12838">
    <property type="entry name" value="Fer4_7"/>
    <property type="match status" value="1"/>
</dbReference>
<dbReference type="SUPFAM" id="SSF54862">
    <property type="entry name" value="4Fe-4S ferredoxins"/>
    <property type="match status" value="1"/>
</dbReference>
<dbReference type="PROSITE" id="PS00198">
    <property type="entry name" value="4FE4S_FER_1"/>
    <property type="match status" value="2"/>
</dbReference>
<dbReference type="PROSITE" id="PS51379">
    <property type="entry name" value="4FE4S_FER_2"/>
    <property type="match status" value="2"/>
</dbReference>
<name>NUOI_BORA1</name>
<protein>
    <recommendedName>
        <fullName evidence="1">NADH-quinone oxidoreductase subunit I</fullName>
        <ecNumber evidence="1">7.1.1.-</ecNumber>
    </recommendedName>
    <alternativeName>
        <fullName evidence="1">NADH dehydrogenase I subunit I</fullName>
    </alternativeName>
    <alternativeName>
        <fullName evidence="1">NDH-1 subunit I</fullName>
    </alternativeName>
</protein>
<reference key="1">
    <citation type="journal article" date="2006" name="J. Bacteriol.">
        <title>Comparison of the genome sequence of the poultry pathogen Bordetella avium with those of B. bronchiseptica, B. pertussis, and B. parapertussis reveals extensive diversity in surface structures associated with host interaction.</title>
        <authorList>
            <person name="Sebaihia M."/>
            <person name="Preston A."/>
            <person name="Maskell D.J."/>
            <person name="Kuzmiak H."/>
            <person name="Connell T.D."/>
            <person name="King N.D."/>
            <person name="Orndorff P.E."/>
            <person name="Miyamoto D.M."/>
            <person name="Thomson N.R."/>
            <person name="Harris D."/>
            <person name="Goble A."/>
            <person name="Lord A."/>
            <person name="Murphy L."/>
            <person name="Quail M.A."/>
            <person name="Rutter S."/>
            <person name="Squares R."/>
            <person name="Squares S."/>
            <person name="Woodward J."/>
            <person name="Parkhill J."/>
            <person name="Temple L.M."/>
        </authorList>
    </citation>
    <scope>NUCLEOTIDE SEQUENCE [LARGE SCALE GENOMIC DNA]</scope>
    <source>
        <strain>197N</strain>
    </source>
</reference>
<organism>
    <name type="scientific">Bordetella avium (strain 197N)</name>
    <dbReference type="NCBI Taxonomy" id="360910"/>
    <lineage>
        <taxon>Bacteria</taxon>
        <taxon>Pseudomonadati</taxon>
        <taxon>Pseudomonadota</taxon>
        <taxon>Betaproteobacteria</taxon>
        <taxon>Burkholderiales</taxon>
        <taxon>Alcaligenaceae</taxon>
        <taxon>Bordetella</taxon>
    </lineage>
</organism>
<comment type="function">
    <text evidence="1">NDH-1 shuttles electrons from NADH, via FMN and iron-sulfur (Fe-S) centers, to quinones in the respiratory chain. The immediate electron acceptor for the enzyme in this species is believed to be ubiquinone. Couples the redox reaction to proton translocation (for every two electrons transferred, four hydrogen ions are translocated across the cytoplasmic membrane), and thus conserves the redox energy in a proton gradient.</text>
</comment>
<comment type="catalytic activity">
    <reaction evidence="1">
        <text>a quinone + NADH + 5 H(+)(in) = a quinol + NAD(+) + 4 H(+)(out)</text>
        <dbReference type="Rhea" id="RHEA:57888"/>
        <dbReference type="ChEBI" id="CHEBI:15378"/>
        <dbReference type="ChEBI" id="CHEBI:24646"/>
        <dbReference type="ChEBI" id="CHEBI:57540"/>
        <dbReference type="ChEBI" id="CHEBI:57945"/>
        <dbReference type="ChEBI" id="CHEBI:132124"/>
    </reaction>
</comment>
<comment type="cofactor">
    <cofactor evidence="1">
        <name>[4Fe-4S] cluster</name>
        <dbReference type="ChEBI" id="CHEBI:49883"/>
    </cofactor>
    <text evidence="1">Binds 2 [4Fe-4S] clusters per subunit.</text>
</comment>
<comment type="subunit">
    <text evidence="1">NDH-1 is composed of 14 different subunits. Subunits NuoA, H, J, K, L, M, N constitute the membrane sector of the complex.</text>
</comment>
<comment type="subcellular location">
    <subcellularLocation>
        <location evidence="1">Cell inner membrane</location>
        <topology evidence="1">Peripheral membrane protein</topology>
    </subcellularLocation>
</comment>
<comment type="similarity">
    <text evidence="1">Belongs to the complex I 23 kDa subunit family.</text>
</comment>
<feature type="chain" id="PRO_0000250879" description="NADH-quinone oxidoreductase subunit I">
    <location>
        <begin position="1"/>
        <end position="162"/>
    </location>
</feature>
<feature type="domain" description="4Fe-4S ferredoxin-type 1" evidence="1">
    <location>
        <begin position="53"/>
        <end position="83"/>
    </location>
</feature>
<feature type="domain" description="4Fe-4S ferredoxin-type 2" evidence="1">
    <location>
        <begin position="93"/>
        <end position="122"/>
    </location>
</feature>
<feature type="binding site" evidence="1">
    <location>
        <position position="63"/>
    </location>
    <ligand>
        <name>[4Fe-4S] cluster</name>
        <dbReference type="ChEBI" id="CHEBI:49883"/>
        <label>1</label>
    </ligand>
</feature>
<feature type="binding site" evidence="1">
    <location>
        <position position="66"/>
    </location>
    <ligand>
        <name>[4Fe-4S] cluster</name>
        <dbReference type="ChEBI" id="CHEBI:49883"/>
        <label>1</label>
    </ligand>
</feature>
<feature type="binding site" evidence="1">
    <location>
        <position position="69"/>
    </location>
    <ligand>
        <name>[4Fe-4S] cluster</name>
        <dbReference type="ChEBI" id="CHEBI:49883"/>
        <label>1</label>
    </ligand>
</feature>
<feature type="binding site" evidence="1">
    <location>
        <position position="73"/>
    </location>
    <ligand>
        <name>[4Fe-4S] cluster</name>
        <dbReference type="ChEBI" id="CHEBI:49883"/>
        <label>2</label>
    </ligand>
</feature>
<feature type="binding site" evidence="1">
    <location>
        <position position="102"/>
    </location>
    <ligand>
        <name>[4Fe-4S] cluster</name>
        <dbReference type="ChEBI" id="CHEBI:49883"/>
        <label>2</label>
    </ligand>
</feature>
<feature type="binding site" evidence="1">
    <location>
        <position position="105"/>
    </location>
    <ligand>
        <name>[4Fe-4S] cluster</name>
        <dbReference type="ChEBI" id="CHEBI:49883"/>
        <label>2</label>
    </ligand>
</feature>
<feature type="binding site" evidence="1">
    <location>
        <position position="108"/>
    </location>
    <ligand>
        <name>[4Fe-4S] cluster</name>
        <dbReference type="ChEBI" id="CHEBI:49883"/>
        <label>2</label>
    </ligand>
</feature>
<feature type="binding site" evidence="1">
    <location>
        <position position="112"/>
    </location>
    <ligand>
        <name>[4Fe-4S] cluster</name>
        <dbReference type="ChEBI" id="CHEBI:49883"/>
        <label>1</label>
    </ligand>
</feature>